<gene>
    <name type="ordered locus">YpAngola_A2424</name>
</gene>
<organism>
    <name type="scientific">Yersinia pestis bv. Antiqua (strain Angola)</name>
    <dbReference type="NCBI Taxonomy" id="349746"/>
    <lineage>
        <taxon>Bacteria</taxon>
        <taxon>Pseudomonadati</taxon>
        <taxon>Pseudomonadota</taxon>
        <taxon>Gammaproteobacteria</taxon>
        <taxon>Enterobacterales</taxon>
        <taxon>Yersiniaceae</taxon>
        <taxon>Yersinia</taxon>
    </lineage>
</organism>
<accession>A9QYX6</accession>
<proteinExistence type="inferred from homology"/>
<protein>
    <recommendedName>
        <fullName evidence="1">Probable transcriptional regulatory protein YpAngola_A2424</fullName>
    </recommendedName>
</protein>
<comment type="subcellular location">
    <subcellularLocation>
        <location evidence="1">Cytoplasm</location>
    </subcellularLocation>
</comment>
<comment type="similarity">
    <text evidence="1">Belongs to the TACO1 family.</text>
</comment>
<feature type="chain" id="PRO_1000132262" description="Probable transcriptional regulatory protein YpAngola_A2424">
    <location>
        <begin position="1"/>
        <end position="247"/>
    </location>
</feature>
<evidence type="ECO:0000255" key="1">
    <source>
        <dbReference type="HAMAP-Rule" id="MF_00693"/>
    </source>
</evidence>
<dbReference type="EMBL" id="CP000901">
    <property type="protein sequence ID" value="ABX88268.1"/>
    <property type="molecule type" value="Genomic_DNA"/>
</dbReference>
<dbReference type="RefSeq" id="WP_002211202.1">
    <property type="nucleotide sequence ID" value="NZ_CP009935.1"/>
</dbReference>
<dbReference type="SMR" id="A9QYX6"/>
<dbReference type="KEGG" id="ypg:YpAngola_A2424"/>
<dbReference type="PATRIC" id="fig|349746.12.peg.3441"/>
<dbReference type="GO" id="GO:0005829">
    <property type="term" value="C:cytosol"/>
    <property type="evidence" value="ECO:0007669"/>
    <property type="project" value="TreeGrafter"/>
</dbReference>
<dbReference type="GO" id="GO:0003677">
    <property type="term" value="F:DNA binding"/>
    <property type="evidence" value="ECO:0007669"/>
    <property type="project" value="UniProtKB-UniRule"/>
</dbReference>
<dbReference type="GO" id="GO:0006355">
    <property type="term" value="P:regulation of DNA-templated transcription"/>
    <property type="evidence" value="ECO:0007669"/>
    <property type="project" value="UniProtKB-UniRule"/>
</dbReference>
<dbReference type="FunFam" id="1.10.10.200:FF:000001">
    <property type="entry name" value="Probable transcriptional regulatory protein YebC"/>
    <property type="match status" value="1"/>
</dbReference>
<dbReference type="FunFam" id="3.30.70.980:FF:000002">
    <property type="entry name" value="Probable transcriptional regulatory protein YebC"/>
    <property type="match status" value="1"/>
</dbReference>
<dbReference type="Gene3D" id="1.10.10.200">
    <property type="match status" value="1"/>
</dbReference>
<dbReference type="Gene3D" id="3.30.70.980">
    <property type="match status" value="2"/>
</dbReference>
<dbReference type="HAMAP" id="MF_00693">
    <property type="entry name" value="Transcrip_reg_TACO1"/>
    <property type="match status" value="1"/>
</dbReference>
<dbReference type="InterPro" id="IPR017856">
    <property type="entry name" value="Integrase-like_N"/>
</dbReference>
<dbReference type="InterPro" id="IPR048300">
    <property type="entry name" value="TACO1_YebC-like_2nd/3rd_dom"/>
</dbReference>
<dbReference type="InterPro" id="IPR049083">
    <property type="entry name" value="TACO1_YebC_N"/>
</dbReference>
<dbReference type="InterPro" id="IPR002876">
    <property type="entry name" value="Transcrip_reg_TACO1-like"/>
</dbReference>
<dbReference type="InterPro" id="IPR026564">
    <property type="entry name" value="Transcrip_reg_TACO1-like_dom3"/>
</dbReference>
<dbReference type="InterPro" id="IPR029072">
    <property type="entry name" value="YebC-like"/>
</dbReference>
<dbReference type="NCBIfam" id="NF001030">
    <property type="entry name" value="PRK00110.1"/>
    <property type="match status" value="1"/>
</dbReference>
<dbReference type="NCBIfam" id="NF009044">
    <property type="entry name" value="PRK12378.1"/>
    <property type="match status" value="1"/>
</dbReference>
<dbReference type="NCBIfam" id="TIGR01033">
    <property type="entry name" value="YebC/PmpR family DNA-binding transcriptional regulator"/>
    <property type="match status" value="1"/>
</dbReference>
<dbReference type="PANTHER" id="PTHR12532:SF6">
    <property type="entry name" value="TRANSCRIPTIONAL REGULATORY PROTEIN YEBC-RELATED"/>
    <property type="match status" value="1"/>
</dbReference>
<dbReference type="PANTHER" id="PTHR12532">
    <property type="entry name" value="TRANSLATIONAL ACTIVATOR OF CYTOCHROME C OXIDASE 1"/>
    <property type="match status" value="1"/>
</dbReference>
<dbReference type="Pfam" id="PF20772">
    <property type="entry name" value="TACO1_YebC_N"/>
    <property type="match status" value="1"/>
</dbReference>
<dbReference type="Pfam" id="PF01709">
    <property type="entry name" value="Transcrip_reg"/>
    <property type="match status" value="1"/>
</dbReference>
<dbReference type="SUPFAM" id="SSF75625">
    <property type="entry name" value="YebC-like"/>
    <property type="match status" value="1"/>
</dbReference>
<reference key="1">
    <citation type="journal article" date="2010" name="J. Bacteriol.">
        <title>Genome sequence of the deep-rooted Yersinia pestis strain Angola reveals new insights into the evolution and pangenome of the plague bacterium.</title>
        <authorList>
            <person name="Eppinger M."/>
            <person name="Worsham P.L."/>
            <person name="Nikolich M.P."/>
            <person name="Riley D.R."/>
            <person name="Sebastian Y."/>
            <person name="Mou S."/>
            <person name="Achtman M."/>
            <person name="Lindler L.E."/>
            <person name="Ravel J."/>
        </authorList>
    </citation>
    <scope>NUCLEOTIDE SEQUENCE [LARGE SCALE GENOMIC DNA]</scope>
    <source>
        <strain>Angola</strain>
    </source>
</reference>
<sequence>MAGHSKWANTKHRKAAQDAKRGKIFTKIIRELVTAARLGGGDPGANPRLRAAIDKALSNNMTRDTLNRAIARGVGGDEDNNMETIIYEGYGPGGTAVMVECLSDNRNRTVSEVRHAFTKTGGNLGTDGSVSYLFTKKGVISYAPGLEEDTVMDAALEAGADDIVVYDDGAIDVFTAWESLGAVKDALDATGLVAEGAEVSLIPSTKAELDAETAPKLLRLIDMLEDSDDVQEVYHNGEISDEVAATL</sequence>
<name>Y2424_YERPG</name>
<keyword id="KW-0963">Cytoplasm</keyword>
<keyword id="KW-0238">DNA-binding</keyword>
<keyword id="KW-0804">Transcription</keyword>
<keyword id="KW-0805">Transcription regulation</keyword>